<keyword id="KW-0058">Aromatic hydrocarbons catabolism</keyword>
<keyword id="KW-0456">Lyase</keyword>
<keyword id="KW-0464">Manganese</keyword>
<keyword id="KW-0479">Metal-binding</keyword>
<reference key="1">
    <citation type="journal article" date="2007" name="Genome Res.">
        <title>Genome characteristics of facultatively symbiotic Frankia sp. strains reflect host range and host plant biogeography.</title>
        <authorList>
            <person name="Normand P."/>
            <person name="Lapierre P."/>
            <person name="Tisa L.S."/>
            <person name="Gogarten J.P."/>
            <person name="Alloisio N."/>
            <person name="Bagnarol E."/>
            <person name="Bassi C.A."/>
            <person name="Berry A.M."/>
            <person name="Bickhart D.M."/>
            <person name="Choisne N."/>
            <person name="Couloux A."/>
            <person name="Cournoyer B."/>
            <person name="Cruveiller S."/>
            <person name="Daubin V."/>
            <person name="Demange N."/>
            <person name="Francino M.P."/>
            <person name="Goltsman E."/>
            <person name="Huang Y."/>
            <person name="Kopp O.R."/>
            <person name="Labarre L."/>
            <person name="Lapidus A."/>
            <person name="Lavire C."/>
            <person name="Marechal J."/>
            <person name="Martinez M."/>
            <person name="Mastronunzio J.E."/>
            <person name="Mullin B.C."/>
            <person name="Niemann J."/>
            <person name="Pujic P."/>
            <person name="Rawnsley T."/>
            <person name="Rouy Z."/>
            <person name="Schenowitz C."/>
            <person name="Sellstedt A."/>
            <person name="Tavares F."/>
            <person name="Tomkins J.P."/>
            <person name="Vallenet D."/>
            <person name="Valverde C."/>
            <person name="Wall L.G."/>
            <person name="Wang Y."/>
            <person name="Medigue C."/>
            <person name="Benson D.R."/>
        </authorList>
    </citation>
    <scope>NUCLEOTIDE SEQUENCE [LARGE SCALE GENOMIC DNA]</scope>
    <source>
        <strain>EAN1pec</strain>
    </source>
</reference>
<gene>
    <name type="ordered locus">Franean1_2882</name>
</gene>
<dbReference type="EC" id="4.1.3.39" evidence="1"/>
<dbReference type="EMBL" id="CP000820">
    <property type="protein sequence ID" value="ABW12303.1"/>
    <property type="molecule type" value="Genomic_DNA"/>
</dbReference>
<dbReference type="RefSeq" id="WP_020460455.1">
    <property type="nucleotide sequence ID" value="NC_009921.1"/>
</dbReference>
<dbReference type="SMR" id="A8LAA1"/>
<dbReference type="STRING" id="298653.Franean1_2882"/>
<dbReference type="KEGG" id="fre:Franean1_2882"/>
<dbReference type="eggNOG" id="COG0119">
    <property type="taxonomic scope" value="Bacteria"/>
</dbReference>
<dbReference type="HOGENOM" id="CLU_049173_0_0_11"/>
<dbReference type="GO" id="GO:0003852">
    <property type="term" value="F:2-isopropylmalate synthase activity"/>
    <property type="evidence" value="ECO:0007669"/>
    <property type="project" value="TreeGrafter"/>
</dbReference>
<dbReference type="GO" id="GO:0008701">
    <property type="term" value="F:4-hydroxy-2-oxovalerate aldolase activity"/>
    <property type="evidence" value="ECO:0007669"/>
    <property type="project" value="UniProtKB-UniRule"/>
</dbReference>
<dbReference type="GO" id="GO:0030145">
    <property type="term" value="F:manganese ion binding"/>
    <property type="evidence" value="ECO:0007669"/>
    <property type="project" value="UniProtKB-UniRule"/>
</dbReference>
<dbReference type="GO" id="GO:0009056">
    <property type="term" value="P:catabolic process"/>
    <property type="evidence" value="ECO:0007669"/>
    <property type="project" value="UniProtKB-KW"/>
</dbReference>
<dbReference type="GO" id="GO:0009098">
    <property type="term" value="P:L-leucine biosynthetic process"/>
    <property type="evidence" value="ECO:0007669"/>
    <property type="project" value="TreeGrafter"/>
</dbReference>
<dbReference type="CDD" id="cd07943">
    <property type="entry name" value="DRE_TIM_HOA"/>
    <property type="match status" value="1"/>
</dbReference>
<dbReference type="Gene3D" id="1.10.8.60">
    <property type="match status" value="1"/>
</dbReference>
<dbReference type="Gene3D" id="3.20.20.70">
    <property type="entry name" value="Aldolase class I"/>
    <property type="match status" value="1"/>
</dbReference>
<dbReference type="HAMAP" id="MF_01656">
    <property type="entry name" value="HOA"/>
    <property type="match status" value="1"/>
</dbReference>
<dbReference type="InterPro" id="IPR050073">
    <property type="entry name" value="2-IPM_HCS-like"/>
</dbReference>
<dbReference type="InterPro" id="IPR017629">
    <property type="entry name" value="4OH_2_O-val_aldolase"/>
</dbReference>
<dbReference type="InterPro" id="IPR013785">
    <property type="entry name" value="Aldolase_TIM"/>
</dbReference>
<dbReference type="InterPro" id="IPR012425">
    <property type="entry name" value="DmpG_comm"/>
</dbReference>
<dbReference type="InterPro" id="IPR035685">
    <property type="entry name" value="DRE_TIM_HOA"/>
</dbReference>
<dbReference type="InterPro" id="IPR000891">
    <property type="entry name" value="PYR_CT"/>
</dbReference>
<dbReference type="NCBIfam" id="TIGR03217">
    <property type="entry name" value="4OH_2_O_val_ald"/>
    <property type="match status" value="1"/>
</dbReference>
<dbReference type="NCBIfam" id="NF006049">
    <property type="entry name" value="PRK08195.1"/>
    <property type="match status" value="1"/>
</dbReference>
<dbReference type="PANTHER" id="PTHR10277:SF9">
    <property type="entry name" value="2-ISOPROPYLMALATE SYNTHASE 1, CHLOROPLASTIC-RELATED"/>
    <property type="match status" value="1"/>
</dbReference>
<dbReference type="PANTHER" id="PTHR10277">
    <property type="entry name" value="HOMOCITRATE SYNTHASE-RELATED"/>
    <property type="match status" value="1"/>
</dbReference>
<dbReference type="Pfam" id="PF07836">
    <property type="entry name" value="DmpG_comm"/>
    <property type="match status" value="1"/>
</dbReference>
<dbReference type="Pfam" id="PF00682">
    <property type="entry name" value="HMGL-like"/>
    <property type="match status" value="1"/>
</dbReference>
<dbReference type="SUPFAM" id="SSF51569">
    <property type="entry name" value="Aldolase"/>
    <property type="match status" value="1"/>
</dbReference>
<dbReference type="SUPFAM" id="SSF89000">
    <property type="entry name" value="post-HMGL domain-like"/>
    <property type="match status" value="1"/>
</dbReference>
<dbReference type="PROSITE" id="PS50991">
    <property type="entry name" value="PYR_CT"/>
    <property type="match status" value="1"/>
</dbReference>
<protein>
    <recommendedName>
        <fullName evidence="1">4-hydroxy-2-oxovalerate aldolase 1</fullName>
        <shortName evidence="1">HOA 1</shortName>
        <ecNumber evidence="1">4.1.3.39</ecNumber>
    </recommendedName>
    <alternativeName>
        <fullName evidence="1">4-hydroxy-2-keto-pentanoic acid aldolase 1</fullName>
    </alternativeName>
    <alternativeName>
        <fullName evidence="1">4-hydroxy-2-oxopentanoate aldolase 1</fullName>
    </alternativeName>
</protein>
<sequence length="377" mass="39757">MTSLSAGTSTAPDTSPDRPAEPFVPDLYVQDVTLRDGMHAVRHRYSVETARTIATALDASGVRAIEVAHGDGLAGSSINYGIGAHTDWEWIEAVTASVTNAIPTSLLLPGIGTVRDLRQAHALGIRSVRVATHCTEADISAQHISAARDLGMDVAGFLMMSHMAAPAELARQARLMESYGAHCVYVTDSGGRLTMDDVRDRFRAYSDVLDPATETGIHAHHNLGLGVANTVVAVENGATRVDASLAGQGAGAGNCPLEAFIAVADLMGWKHGCELFGLMDTADDVVRPLQDRPVRVDRETLTLGYAGVYSSFLRHAEAAATRYGLDTRTILAEVGRRGMVGGQEDMIVDVALDLVARATGRGIVASAESGITAPDQS</sequence>
<proteinExistence type="inferred from homology"/>
<comment type="catalytic activity">
    <reaction evidence="1">
        <text>(S)-4-hydroxy-2-oxopentanoate = acetaldehyde + pyruvate</text>
        <dbReference type="Rhea" id="RHEA:22624"/>
        <dbReference type="ChEBI" id="CHEBI:15343"/>
        <dbReference type="ChEBI" id="CHEBI:15361"/>
        <dbReference type="ChEBI" id="CHEBI:73143"/>
        <dbReference type="EC" id="4.1.3.39"/>
    </reaction>
</comment>
<comment type="similarity">
    <text evidence="1">Belongs to the 4-hydroxy-2-oxovalerate aldolase family.</text>
</comment>
<organism>
    <name type="scientific">Parafrankia sp. (strain EAN1pec)</name>
    <dbReference type="NCBI Taxonomy" id="298653"/>
    <lineage>
        <taxon>Bacteria</taxon>
        <taxon>Bacillati</taxon>
        <taxon>Actinomycetota</taxon>
        <taxon>Actinomycetes</taxon>
        <taxon>Frankiales</taxon>
        <taxon>Frankiaceae</taxon>
        <taxon>Parafrankia</taxon>
    </lineage>
</organism>
<feature type="chain" id="PRO_0000387834" description="4-hydroxy-2-oxovalerate aldolase 1">
    <location>
        <begin position="1"/>
        <end position="377"/>
    </location>
</feature>
<feature type="domain" description="Pyruvate carboxyltransferase" evidence="1">
    <location>
        <begin position="27"/>
        <end position="279"/>
    </location>
</feature>
<feature type="region of interest" description="Disordered" evidence="2">
    <location>
        <begin position="1"/>
        <end position="23"/>
    </location>
</feature>
<feature type="compositionally biased region" description="Polar residues" evidence="2">
    <location>
        <begin position="1"/>
        <end position="13"/>
    </location>
</feature>
<feature type="active site" description="Proton acceptor" evidence="1">
    <location>
        <position position="39"/>
    </location>
</feature>
<feature type="binding site" evidence="1">
    <location>
        <begin position="35"/>
        <end position="36"/>
    </location>
    <ligand>
        <name>substrate</name>
    </ligand>
</feature>
<feature type="binding site" evidence="1">
    <location>
        <position position="36"/>
    </location>
    <ligand>
        <name>Mn(2+)</name>
        <dbReference type="ChEBI" id="CHEBI:29035"/>
    </ligand>
</feature>
<feature type="binding site" evidence="1">
    <location>
        <position position="189"/>
    </location>
    <ligand>
        <name>substrate</name>
    </ligand>
</feature>
<feature type="binding site" evidence="1">
    <location>
        <position position="218"/>
    </location>
    <ligand>
        <name>Mn(2+)</name>
        <dbReference type="ChEBI" id="CHEBI:29035"/>
    </ligand>
</feature>
<feature type="binding site" evidence="1">
    <location>
        <position position="218"/>
    </location>
    <ligand>
        <name>substrate</name>
    </ligand>
</feature>
<feature type="binding site" evidence="1">
    <location>
        <position position="220"/>
    </location>
    <ligand>
        <name>Mn(2+)</name>
        <dbReference type="ChEBI" id="CHEBI:29035"/>
    </ligand>
</feature>
<feature type="binding site" evidence="1">
    <location>
        <position position="309"/>
    </location>
    <ligand>
        <name>substrate</name>
    </ligand>
</feature>
<feature type="site" description="Transition state stabilizer" evidence="1">
    <location>
        <position position="35"/>
    </location>
</feature>
<evidence type="ECO:0000255" key="1">
    <source>
        <dbReference type="HAMAP-Rule" id="MF_01656"/>
    </source>
</evidence>
<evidence type="ECO:0000256" key="2">
    <source>
        <dbReference type="SAM" id="MobiDB-lite"/>
    </source>
</evidence>
<accession>A8LAA1</accession>
<name>HOA1_PARS2</name>